<keyword id="KW-0963">Cytoplasm</keyword>
<keyword id="KW-0444">Lipid biosynthesis</keyword>
<keyword id="KW-0443">Lipid metabolism</keyword>
<keyword id="KW-0479">Metal-binding</keyword>
<keyword id="KW-0520">NAD</keyword>
<keyword id="KW-0521">NADP</keyword>
<keyword id="KW-0560">Oxidoreductase</keyword>
<keyword id="KW-0594">Phospholipid biosynthesis</keyword>
<keyword id="KW-1208">Phospholipid metabolism</keyword>
<keyword id="KW-0862">Zinc</keyword>
<accession>A6UUD2</accession>
<protein>
    <recommendedName>
        <fullName evidence="1">Glycerol-1-phosphate dehydrogenase [NAD(P)+]</fullName>
        <shortName evidence="1">G1P dehydrogenase</shortName>
        <shortName evidence="1">G1PDH</shortName>
        <ecNumber evidence="1">1.1.1.261</ecNumber>
    </recommendedName>
    <alternativeName>
        <fullName evidence="1">Enantiomeric glycerophosphate synthase</fullName>
    </alternativeName>
    <alternativeName>
        <fullName evidence="1">sn-glycerol-1-phosphate dehydrogenase</fullName>
    </alternativeName>
</protein>
<gene>
    <name evidence="1" type="primary">egsA</name>
    <name type="ordered locus">Maeo_0518</name>
</gene>
<reference key="1">
    <citation type="submission" date="2007-06" db="EMBL/GenBank/DDBJ databases">
        <title>Complete sequence of Methanococcus aeolicus Nankai-3.</title>
        <authorList>
            <consortium name="US DOE Joint Genome Institute"/>
            <person name="Copeland A."/>
            <person name="Lucas S."/>
            <person name="Lapidus A."/>
            <person name="Barry K."/>
            <person name="Glavina del Rio T."/>
            <person name="Dalin E."/>
            <person name="Tice H."/>
            <person name="Pitluck S."/>
            <person name="Chain P."/>
            <person name="Malfatti S."/>
            <person name="Shin M."/>
            <person name="Vergez L."/>
            <person name="Schmutz J."/>
            <person name="Larimer F."/>
            <person name="Land M."/>
            <person name="Hauser L."/>
            <person name="Kyrpides N."/>
            <person name="Lykidis A."/>
            <person name="Sieprawska-Lupa M."/>
            <person name="Whitman W.B."/>
            <person name="Richardson P."/>
        </authorList>
    </citation>
    <scope>NUCLEOTIDE SEQUENCE [LARGE SCALE GENOMIC DNA]</scope>
    <source>
        <strain>ATCC BAA-1280 / DSM 17508 / OCM 812 / Nankai-3</strain>
    </source>
</reference>
<proteinExistence type="inferred from homology"/>
<evidence type="ECO:0000255" key="1">
    <source>
        <dbReference type="HAMAP-Rule" id="MF_00497"/>
    </source>
</evidence>
<name>G1PDH_META3</name>
<sequence>MITTPRYIVIEENGINLLNDILLKLNLKNPLVITGKRTKKYISNFDYFYYFDYIDIKRNEPNKEFIENICNFDCIIGVGGGKAIDVGKYIAYKYNKQFISIPTTASNDGIASPIISQQGKSITAESPIAIIADLNIIKKSPKRLLSAGMGDIVSNITAVLDWKLSYKETKEPYSESSAIFSKTIAMELVEFVLSNDKNNLEEYPKKLVKALIGSGITISIAGSTRPASGSEHLFSHSLDIITKKLNLNINGIHGEQCGIGTIISAYLHLIEGNITIGEYENIKLSLEKVGAPTIGEQLGYDKNILIDALANAHKIRNRWTILRNGISKEKAEKILKKTDII</sequence>
<feature type="chain" id="PRO_0000350648" description="Glycerol-1-phosphate dehydrogenase [NAD(P)+]">
    <location>
        <begin position="1"/>
        <end position="341"/>
    </location>
</feature>
<feature type="binding site" evidence="1">
    <location>
        <begin position="81"/>
        <end position="85"/>
    </location>
    <ligand>
        <name>NAD(+)</name>
        <dbReference type="ChEBI" id="CHEBI:57540"/>
    </ligand>
</feature>
<feature type="binding site" evidence="1">
    <location>
        <begin position="103"/>
        <end position="106"/>
    </location>
    <ligand>
        <name>NAD(+)</name>
        <dbReference type="ChEBI" id="CHEBI:57540"/>
    </ligand>
</feature>
<feature type="binding site" evidence="1">
    <location>
        <position position="108"/>
    </location>
    <ligand>
        <name>substrate</name>
    </ligand>
</feature>
<feature type="binding site" evidence="1">
    <location>
        <position position="112"/>
    </location>
    <ligand>
        <name>NAD(+)</name>
        <dbReference type="ChEBI" id="CHEBI:57540"/>
    </ligand>
</feature>
<feature type="binding site" evidence="1">
    <location>
        <position position="151"/>
    </location>
    <ligand>
        <name>substrate</name>
    </ligand>
</feature>
<feature type="binding site" evidence="1">
    <location>
        <position position="151"/>
    </location>
    <ligand>
        <name>Zn(2+)</name>
        <dbReference type="ChEBI" id="CHEBI:29105"/>
        <note>catalytic</note>
    </ligand>
</feature>
<feature type="binding site" evidence="1">
    <location>
        <position position="232"/>
    </location>
    <ligand>
        <name>Zn(2+)</name>
        <dbReference type="ChEBI" id="CHEBI:29105"/>
        <note>catalytic</note>
    </ligand>
</feature>
<feature type="binding site" evidence="1">
    <location>
        <position position="236"/>
    </location>
    <ligand>
        <name>substrate</name>
    </ligand>
</feature>
<feature type="binding site" evidence="1">
    <location>
        <position position="253"/>
    </location>
    <ligand>
        <name>Zn(2+)</name>
        <dbReference type="ChEBI" id="CHEBI:29105"/>
        <note>catalytic</note>
    </ligand>
</feature>
<comment type="function">
    <text evidence="1">Catalyzes the NAD(P)H-dependent reduction of dihydroxyacetonephosphate (DHAP or glycerone phosphate) to glycerol 1-phosphate (G1P). The G1P thus generated is used as the glycerophosphate backbone of phospholipids in the cellular membranes of Archaea.</text>
</comment>
<comment type="catalytic activity">
    <reaction evidence="1">
        <text>sn-glycerol 1-phosphate + NAD(+) = dihydroxyacetone phosphate + NADH + H(+)</text>
        <dbReference type="Rhea" id="RHEA:21412"/>
        <dbReference type="ChEBI" id="CHEBI:15378"/>
        <dbReference type="ChEBI" id="CHEBI:57540"/>
        <dbReference type="ChEBI" id="CHEBI:57642"/>
        <dbReference type="ChEBI" id="CHEBI:57685"/>
        <dbReference type="ChEBI" id="CHEBI:57945"/>
        <dbReference type="EC" id="1.1.1.261"/>
    </reaction>
</comment>
<comment type="catalytic activity">
    <reaction evidence="1">
        <text>sn-glycerol 1-phosphate + NADP(+) = dihydroxyacetone phosphate + NADPH + H(+)</text>
        <dbReference type="Rhea" id="RHEA:21416"/>
        <dbReference type="ChEBI" id="CHEBI:15378"/>
        <dbReference type="ChEBI" id="CHEBI:57642"/>
        <dbReference type="ChEBI" id="CHEBI:57685"/>
        <dbReference type="ChEBI" id="CHEBI:57783"/>
        <dbReference type="ChEBI" id="CHEBI:58349"/>
        <dbReference type="EC" id="1.1.1.261"/>
    </reaction>
</comment>
<comment type="cofactor">
    <cofactor evidence="1">
        <name>Zn(2+)</name>
        <dbReference type="ChEBI" id="CHEBI:29105"/>
    </cofactor>
    <text evidence="1">Binds 1 zinc ion per subunit.</text>
</comment>
<comment type="pathway">
    <text evidence="1">Membrane lipid metabolism; glycerophospholipid metabolism.</text>
</comment>
<comment type="subcellular location">
    <subcellularLocation>
        <location evidence="1">Cytoplasm</location>
    </subcellularLocation>
</comment>
<comment type="similarity">
    <text evidence="1">Belongs to the glycerol-1-phosphate dehydrogenase family.</text>
</comment>
<organism>
    <name type="scientific">Methanococcus aeolicus (strain ATCC BAA-1280 / DSM 17508 / OCM 812 / Nankai-3)</name>
    <dbReference type="NCBI Taxonomy" id="419665"/>
    <lineage>
        <taxon>Archaea</taxon>
        <taxon>Methanobacteriati</taxon>
        <taxon>Methanobacteriota</taxon>
        <taxon>Methanomada group</taxon>
        <taxon>Methanococci</taxon>
        <taxon>Methanococcales</taxon>
        <taxon>Methanococcaceae</taxon>
        <taxon>Methanococcus</taxon>
    </lineage>
</organism>
<dbReference type="EC" id="1.1.1.261" evidence="1"/>
<dbReference type="EMBL" id="CP000743">
    <property type="protein sequence ID" value="ABR56104.1"/>
    <property type="molecule type" value="Genomic_DNA"/>
</dbReference>
<dbReference type="RefSeq" id="WP_011973236.1">
    <property type="nucleotide sequence ID" value="NC_009635.1"/>
</dbReference>
<dbReference type="SMR" id="A6UUD2"/>
<dbReference type="STRING" id="419665.Maeo_0518"/>
<dbReference type="GeneID" id="5327503"/>
<dbReference type="KEGG" id="mae:Maeo_0518"/>
<dbReference type="eggNOG" id="arCOG00982">
    <property type="taxonomic scope" value="Archaea"/>
</dbReference>
<dbReference type="HOGENOM" id="CLU_038362_0_0_2"/>
<dbReference type="OrthoDB" id="8656at2157"/>
<dbReference type="UniPathway" id="UPA00940"/>
<dbReference type="Proteomes" id="UP000001106">
    <property type="component" value="Chromosome"/>
</dbReference>
<dbReference type="GO" id="GO:0005737">
    <property type="term" value="C:cytoplasm"/>
    <property type="evidence" value="ECO:0007669"/>
    <property type="project" value="UniProtKB-SubCell"/>
</dbReference>
<dbReference type="GO" id="GO:0106357">
    <property type="term" value="F:glycerol-1-phosphate dehydrogenase (NAD+) activity"/>
    <property type="evidence" value="ECO:0007669"/>
    <property type="project" value="RHEA"/>
</dbReference>
<dbReference type="GO" id="GO:0106358">
    <property type="term" value="F:glycerol-1-phosphate dehydrogenase (NADP+) activity"/>
    <property type="evidence" value="ECO:0007669"/>
    <property type="project" value="RHEA"/>
</dbReference>
<dbReference type="GO" id="GO:0046872">
    <property type="term" value="F:metal ion binding"/>
    <property type="evidence" value="ECO:0007669"/>
    <property type="project" value="UniProtKB-KW"/>
</dbReference>
<dbReference type="GO" id="GO:0006650">
    <property type="term" value="P:glycerophospholipid metabolic process"/>
    <property type="evidence" value="ECO:0007669"/>
    <property type="project" value="UniProtKB-UniRule"/>
</dbReference>
<dbReference type="GO" id="GO:0008654">
    <property type="term" value="P:phospholipid biosynthetic process"/>
    <property type="evidence" value="ECO:0007669"/>
    <property type="project" value="UniProtKB-KW"/>
</dbReference>
<dbReference type="CDD" id="cd08173">
    <property type="entry name" value="Gro1PDH"/>
    <property type="match status" value="1"/>
</dbReference>
<dbReference type="Gene3D" id="3.40.50.1970">
    <property type="match status" value="1"/>
</dbReference>
<dbReference type="Gene3D" id="1.20.1090.10">
    <property type="entry name" value="Dehydroquinate synthase-like - alpha domain"/>
    <property type="match status" value="1"/>
</dbReference>
<dbReference type="HAMAP" id="MF_00497_A">
    <property type="entry name" value="G1P_dehydrogenase_A"/>
    <property type="match status" value="1"/>
</dbReference>
<dbReference type="InterPro" id="IPR023002">
    <property type="entry name" value="G1P_dehydrogenase_arc"/>
</dbReference>
<dbReference type="InterPro" id="IPR032837">
    <property type="entry name" value="G1PDH"/>
</dbReference>
<dbReference type="InterPro" id="IPR016205">
    <property type="entry name" value="Glycerol_DH"/>
</dbReference>
<dbReference type="PANTHER" id="PTHR43616">
    <property type="entry name" value="GLYCEROL DEHYDROGENASE"/>
    <property type="match status" value="1"/>
</dbReference>
<dbReference type="PANTHER" id="PTHR43616:SF5">
    <property type="entry name" value="GLYCEROL DEHYDROGENASE 1"/>
    <property type="match status" value="1"/>
</dbReference>
<dbReference type="Pfam" id="PF13685">
    <property type="entry name" value="Fe-ADH_2"/>
    <property type="match status" value="1"/>
</dbReference>
<dbReference type="SUPFAM" id="SSF56796">
    <property type="entry name" value="Dehydroquinate synthase-like"/>
    <property type="match status" value="1"/>
</dbReference>